<evidence type="ECO:0000255" key="1">
    <source>
        <dbReference type="HAMAP-Rule" id="MF_01084"/>
    </source>
</evidence>
<name>DPHB_THEON</name>
<accession>B6YXP9</accession>
<dbReference type="EC" id="2.1.1.98" evidence="1"/>
<dbReference type="EMBL" id="CP000855">
    <property type="protein sequence ID" value="ACJ16862.1"/>
    <property type="molecule type" value="Genomic_DNA"/>
</dbReference>
<dbReference type="RefSeq" id="WP_012572334.1">
    <property type="nucleotide sequence ID" value="NC_011529.1"/>
</dbReference>
<dbReference type="SMR" id="B6YXP9"/>
<dbReference type="STRING" id="523850.TON_1372"/>
<dbReference type="GeneID" id="7018403"/>
<dbReference type="KEGG" id="ton:TON_1372"/>
<dbReference type="PATRIC" id="fig|523850.10.peg.1380"/>
<dbReference type="eggNOG" id="arCOG04161">
    <property type="taxonomic scope" value="Archaea"/>
</dbReference>
<dbReference type="HOGENOM" id="CLU_066040_0_0_2"/>
<dbReference type="OrthoDB" id="39139at2157"/>
<dbReference type="UniPathway" id="UPA00559"/>
<dbReference type="Proteomes" id="UP000002727">
    <property type="component" value="Chromosome"/>
</dbReference>
<dbReference type="GO" id="GO:0004164">
    <property type="term" value="F:diphthine synthase activity"/>
    <property type="evidence" value="ECO:0007669"/>
    <property type="project" value="UniProtKB-UniRule"/>
</dbReference>
<dbReference type="GO" id="GO:0032259">
    <property type="term" value="P:methylation"/>
    <property type="evidence" value="ECO:0007669"/>
    <property type="project" value="UniProtKB-KW"/>
</dbReference>
<dbReference type="GO" id="GO:0017183">
    <property type="term" value="P:protein histidyl modification to diphthamide"/>
    <property type="evidence" value="ECO:0007669"/>
    <property type="project" value="UniProtKB-UniRule"/>
</dbReference>
<dbReference type="CDD" id="cd11647">
    <property type="entry name" value="DHP5_DphB"/>
    <property type="match status" value="1"/>
</dbReference>
<dbReference type="FunFam" id="3.30.950.10:FF:000004">
    <property type="entry name" value="Diphthine synthase putative"/>
    <property type="match status" value="1"/>
</dbReference>
<dbReference type="FunFam" id="3.40.1010.10:FF:000004">
    <property type="entry name" value="Putative diphthine synthase"/>
    <property type="match status" value="1"/>
</dbReference>
<dbReference type="Gene3D" id="3.40.1010.10">
    <property type="entry name" value="Cobalt-precorrin-4 Transmethylase, Domain 1"/>
    <property type="match status" value="1"/>
</dbReference>
<dbReference type="Gene3D" id="3.30.950.10">
    <property type="entry name" value="Methyltransferase, Cobalt-precorrin-4 Transmethylase, Domain 2"/>
    <property type="match status" value="1"/>
</dbReference>
<dbReference type="HAMAP" id="MF_01084">
    <property type="entry name" value="Diphthine_synth"/>
    <property type="match status" value="1"/>
</dbReference>
<dbReference type="InterPro" id="IPR000878">
    <property type="entry name" value="4pyrrol_Mease"/>
</dbReference>
<dbReference type="InterPro" id="IPR035996">
    <property type="entry name" value="4pyrrol_Methylase_sf"/>
</dbReference>
<dbReference type="InterPro" id="IPR014777">
    <property type="entry name" value="4pyrrole_Mease_sub1"/>
</dbReference>
<dbReference type="InterPro" id="IPR014776">
    <property type="entry name" value="4pyrrole_Mease_sub2"/>
</dbReference>
<dbReference type="InterPro" id="IPR004551">
    <property type="entry name" value="Dphthn_synthase"/>
</dbReference>
<dbReference type="NCBIfam" id="TIGR00522">
    <property type="entry name" value="dph5"/>
    <property type="match status" value="1"/>
</dbReference>
<dbReference type="PANTHER" id="PTHR10882:SF0">
    <property type="entry name" value="DIPHTHINE METHYL ESTER SYNTHASE"/>
    <property type="match status" value="1"/>
</dbReference>
<dbReference type="PANTHER" id="PTHR10882">
    <property type="entry name" value="DIPHTHINE SYNTHASE"/>
    <property type="match status" value="1"/>
</dbReference>
<dbReference type="Pfam" id="PF00590">
    <property type="entry name" value="TP_methylase"/>
    <property type="match status" value="1"/>
</dbReference>
<dbReference type="PIRSF" id="PIRSF036432">
    <property type="entry name" value="Diphthine_synth"/>
    <property type="match status" value="1"/>
</dbReference>
<dbReference type="SUPFAM" id="SSF53790">
    <property type="entry name" value="Tetrapyrrole methylase"/>
    <property type="match status" value="1"/>
</dbReference>
<organism>
    <name type="scientific">Thermococcus onnurineus (strain NA1)</name>
    <dbReference type="NCBI Taxonomy" id="523850"/>
    <lineage>
        <taxon>Archaea</taxon>
        <taxon>Methanobacteriati</taxon>
        <taxon>Methanobacteriota</taxon>
        <taxon>Thermococci</taxon>
        <taxon>Thermococcales</taxon>
        <taxon>Thermococcaceae</taxon>
        <taxon>Thermococcus</taxon>
    </lineage>
</organism>
<sequence length="264" mass="29663">MAIYFIGLGLYDEKDITLKGLETARKCDLVFAEFYTSLLAGTTLDKIEELIGKPIRRLSREEVELQFERIVLSEAKGKDVAFLTAGDPMVATTHSDLRIRAKEMGIESYVIHAPSIYSAIAITGLQVYKFGKSATVAYPEKNWFPTSHYDVIRENKERGLHTMLFLDIKADQNRYMTANEAMEILLQVEEMKGEGVFTPDTLVVVLARAGSLNPTLKAGYVRDMLNEDFGRQPHVMVVPGRLHIVEAEYLVTFAGAPRKILDEV</sequence>
<feature type="chain" id="PRO_1000136878" description="Diphthine synthase">
    <location>
        <begin position="1"/>
        <end position="264"/>
    </location>
</feature>
<feature type="binding site" evidence="1">
    <location>
        <position position="10"/>
    </location>
    <ligand>
        <name>S-adenosyl-L-methionine</name>
        <dbReference type="ChEBI" id="CHEBI:59789"/>
    </ligand>
</feature>
<feature type="binding site" evidence="1">
    <location>
        <position position="87"/>
    </location>
    <ligand>
        <name>S-adenosyl-L-methionine</name>
        <dbReference type="ChEBI" id="CHEBI:59789"/>
    </ligand>
</feature>
<feature type="binding site" evidence="1">
    <location>
        <position position="90"/>
    </location>
    <ligand>
        <name>S-adenosyl-L-methionine</name>
        <dbReference type="ChEBI" id="CHEBI:59789"/>
    </ligand>
</feature>
<feature type="binding site" evidence="1">
    <location>
        <begin position="115"/>
        <end position="116"/>
    </location>
    <ligand>
        <name>S-adenosyl-L-methionine</name>
        <dbReference type="ChEBI" id="CHEBI:59789"/>
    </ligand>
</feature>
<feature type="binding site" evidence="1">
    <location>
        <position position="166"/>
    </location>
    <ligand>
        <name>S-adenosyl-L-methionine</name>
        <dbReference type="ChEBI" id="CHEBI:59789"/>
    </ligand>
</feature>
<feature type="binding site" evidence="1">
    <location>
        <position position="209"/>
    </location>
    <ligand>
        <name>S-adenosyl-L-methionine</name>
        <dbReference type="ChEBI" id="CHEBI:59789"/>
    </ligand>
</feature>
<feature type="binding site" evidence="1">
    <location>
        <position position="234"/>
    </location>
    <ligand>
        <name>S-adenosyl-L-methionine</name>
        <dbReference type="ChEBI" id="CHEBI:59789"/>
    </ligand>
</feature>
<gene>
    <name evidence="1" type="primary">dphB</name>
    <name type="ordered locus">TON_1372</name>
</gene>
<proteinExistence type="inferred from homology"/>
<reference key="1">
    <citation type="journal article" date="2008" name="J. Bacteriol.">
        <title>The complete genome sequence of Thermococcus onnurineus NA1 reveals a mixed heterotrophic and carboxydotrophic metabolism.</title>
        <authorList>
            <person name="Lee H.S."/>
            <person name="Kang S.G."/>
            <person name="Bae S.S."/>
            <person name="Lim J.K."/>
            <person name="Cho Y."/>
            <person name="Kim Y.J."/>
            <person name="Jeon J.H."/>
            <person name="Cha S.-S."/>
            <person name="Kwon K.K."/>
            <person name="Kim H.-T."/>
            <person name="Park C.-J."/>
            <person name="Lee H.-W."/>
            <person name="Kim S.I."/>
            <person name="Chun J."/>
            <person name="Colwell R.R."/>
            <person name="Kim S.-J."/>
            <person name="Lee J.-H."/>
        </authorList>
    </citation>
    <scope>NUCLEOTIDE SEQUENCE [LARGE SCALE GENOMIC DNA]</scope>
    <source>
        <strain>NA1</strain>
    </source>
</reference>
<comment type="function">
    <text evidence="1">S-adenosyl-L-methionine-dependent methyltransferase that catalyzes the trimethylation of the amino group of the modified target histidine residue in translation elongation factor 2 (EF-2), to form an intermediate called diphthine. The three successive methylation reactions represent the second step of diphthamide biosynthesis.</text>
</comment>
<comment type="catalytic activity">
    <reaction evidence="1">
        <text>2-[(3S)-amino-3-carboxypropyl]-L-histidyl-[translation elongation factor 2] + 3 S-adenosyl-L-methionine = diphthine-[translation elongation factor 2] + 3 S-adenosyl-L-homocysteine + 3 H(+)</text>
        <dbReference type="Rhea" id="RHEA:36415"/>
        <dbReference type="Rhea" id="RHEA-COMP:9749"/>
        <dbReference type="Rhea" id="RHEA-COMP:10172"/>
        <dbReference type="ChEBI" id="CHEBI:15378"/>
        <dbReference type="ChEBI" id="CHEBI:57856"/>
        <dbReference type="ChEBI" id="CHEBI:59789"/>
        <dbReference type="ChEBI" id="CHEBI:73995"/>
        <dbReference type="ChEBI" id="CHEBI:82696"/>
        <dbReference type="EC" id="2.1.1.98"/>
    </reaction>
</comment>
<comment type="pathway">
    <text evidence="1">Protein modification; peptidyl-diphthamide biosynthesis.</text>
</comment>
<comment type="subunit">
    <text evidence="1">Homodimer.</text>
</comment>
<comment type="similarity">
    <text evidence="1">Belongs to the diphthine synthase family.</text>
</comment>
<protein>
    <recommendedName>
        <fullName evidence="1">Diphthine synthase</fullName>
        <ecNumber evidence="1">2.1.1.98</ecNumber>
    </recommendedName>
    <alternativeName>
        <fullName evidence="1">Diphthamide biosynthesis methyltransferase</fullName>
    </alternativeName>
</protein>
<keyword id="KW-0489">Methyltransferase</keyword>
<keyword id="KW-0949">S-adenosyl-L-methionine</keyword>
<keyword id="KW-0808">Transferase</keyword>